<comment type="subcellular location">
    <subcellularLocation>
        <location evidence="2">Membrane</location>
        <topology evidence="2">Multi-pass membrane protein</topology>
    </subcellularLocation>
</comment>
<comment type="similarity">
    <text evidence="2">Belongs to the TMEM211 family.</text>
</comment>
<gene>
    <name type="primary">lhfpl7</name>
    <name type="synonym">tmem211</name>
</gene>
<organism>
    <name type="scientific">Xenopus tropicalis</name>
    <name type="common">Western clawed frog</name>
    <name type="synonym">Silurana tropicalis</name>
    <dbReference type="NCBI Taxonomy" id="8364"/>
    <lineage>
        <taxon>Eukaryota</taxon>
        <taxon>Metazoa</taxon>
        <taxon>Chordata</taxon>
        <taxon>Craniata</taxon>
        <taxon>Vertebrata</taxon>
        <taxon>Euteleostomi</taxon>
        <taxon>Amphibia</taxon>
        <taxon>Batrachia</taxon>
        <taxon>Anura</taxon>
        <taxon>Pipoidea</taxon>
        <taxon>Pipidae</taxon>
        <taxon>Xenopodinae</taxon>
        <taxon>Xenopus</taxon>
        <taxon>Silurana</taxon>
    </lineage>
</organism>
<dbReference type="EMBL" id="BC156033">
    <property type="protein sequence ID" value="AAI56034.1"/>
    <property type="molecule type" value="mRNA"/>
</dbReference>
<dbReference type="RefSeq" id="NP_001107546.1">
    <property type="nucleotide sequence ID" value="NM_001114074.1"/>
</dbReference>
<dbReference type="SMR" id="A9UL59"/>
<dbReference type="FunCoup" id="A9UL59">
    <property type="interactions" value="55"/>
</dbReference>
<dbReference type="PaxDb" id="8364-ENSXETP00000042110"/>
<dbReference type="GeneID" id="100135414"/>
<dbReference type="KEGG" id="xtr:100135414"/>
<dbReference type="AGR" id="Xenbase:XB-GENE-5793390"/>
<dbReference type="CTD" id="255349"/>
<dbReference type="Xenbase" id="XB-GENE-5793390">
    <property type="gene designation" value="lhfpl7"/>
</dbReference>
<dbReference type="eggNOG" id="KOG4026">
    <property type="taxonomic scope" value="Eukaryota"/>
</dbReference>
<dbReference type="HOGENOM" id="CLU_1421051_0_0_1"/>
<dbReference type="InParanoid" id="A9UL59"/>
<dbReference type="OMA" id="FAKEACG"/>
<dbReference type="OrthoDB" id="5975578at2759"/>
<dbReference type="PhylomeDB" id="A9UL59"/>
<dbReference type="TreeFam" id="TF343322"/>
<dbReference type="Proteomes" id="UP000008143">
    <property type="component" value="Chromosome 1"/>
</dbReference>
<dbReference type="Bgee" id="ENSXETG00000031027">
    <property type="expression patterns" value="Expressed in male organism and 2 other cell types or tissues"/>
</dbReference>
<dbReference type="GO" id="GO:0016020">
    <property type="term" value="C:membrane"/>
    <property type="evidence" value="ECO:0007669"/>
    <property type="project" value="UniProtKB-SubCell"/>
</dbReference>
<dbReference type="InterPro" id="IPR019372">
    <property type="entry name" value="LHFPL"/>
</dbReference>
<dbReference type="PANTHER" id="PTHR12489:SF20">
    <property type="entry name" value="LHFPL TETRASPAN SUBFAMILY MEMBER 7 PROTEIN"/>
    <property type="match status" value="1"/>
</dbReference>
<dbReference type="PANTHER" id="PTHR12489">
    <property type="entry name" value="LIPOMA HMGIC FUSION PARTNER-LIKE PROTEIN"/>
    <property type="match status" value="1"/>
</dbReference>
<dbReference type="Pfam" id="PF10242">
    <property type="entry name" value="L_HMGIC_fpl"/>
    <property type="match status" value="1"/>
</dbReference>
<evidence type="ECO:0000255" key="1"/>
<evidence type="ECO:0000305" key="2"/>
<sequence>MMVSCMGSLWVILSLILTLISGFSLMSSAWYKTDTISFGVFVHCIGPKNMPCNQTCIYYRTLEEIPDIFGKIAAVLLFGGWLLLSFGAVLVLSWTIIPVGLCQRRVCTPARYAQISAVVVTVLGLLVFPFNLHSEFARQICGSSFIYKSGDCCLGWGYMMAIVTVMLSCFLPFIGRYNLNEIKTKILLSKM</sequence>
<name>LHPL7_XENTR</name>
<proteinExistence type="evidence at transcript level"/>
<feature type="chain" id="PRO_0000337010" description="LHFPL tetraspan subfamily member 7 protein">
    <location>
        <begin position="1"/>
        <end position="191"/>
    </location>
</feature>
<feature type="transmembrane region" description="Helical" evidence="1">
    <location>
        <begin position="6"/>
        <end position="26"/>
    </location>
</feature>
<feature type="transmembrane region" description="Helical" evidence="1">
    <location>
        <begin position="72"/>
        <end position="92"/>
    </location>
</feature>
<feature type="transmembrane region" description="Helical" evidence="1">
    <location>
        <begin position="112"/>
        <end position="132"/>
    </location>
</feature>
<feature type="transmembrane region" description="Helical" evidence="1">
    <location>
        <begin position="154"/>
        <end position="174"/>
    </location>
</feature>
<keyword id="KW-0472">Membrane</keyword>
<keyword id="KW-1185">Reference proteome</keyword>
<keyword id="KW-0812">Transmembrane</keyword>
<keyword id="KW-1133">Transmembrane helix</keyword>
<reference key="1">
    <citation type="submission" date="2007-12" db="EMBL/GenBank/DDBJ databases">
        <authorList>
            <consortium name="NIH - Xenopus Gene Collection (XGC) project"/>
        </authorList>
    </citation>
    <scope>NUCLEOTIDE SEQUENCE [LARGE SCALE MRNA]</scope>
    <source>
        <tissue>Testis</tissue>
    </source>
</reference>
<protein>
    <recommendedName>
        <fullName>LHFPL tetraspan subfamily member 7 protein</fullName>
    </recommendedName>
    <alternativeName>
        <fullName>Transmembrane protein 211</fullName>
    </alternativeName>
</protein>
<accession>A9UL59</accession>